<dbReference type="EC" id="3.1.-.-" evidence="1"/>
<dbReference type="EMBL" id="AL123456">
    <property type="protein sequence ID" value="CCP45321.1"/>
    <property type="molecule type" value="Genomic_DNA"/>
</dbReference>
<dbReference type="PIR" id="C70657">
    <property type="entry name" value="C70657"/>
</dbReference>
<dbReference type="RefSeq" id="NP_217043.1">
    <property type="nucleotide sequence ID" value="NC_000962.3"/>
</dbReference>
<dbReference type="RefSeq" id="WP_003412963.1">
    <property type="nucleotide sequence ID" value="NZ_NVQJ01000032.1"/>
</dbReference>
<dbReference type="SMR" id="P9WF95"/>
<dbReference type="STRING" id="83332.Rv2527"/>
<dbReference type="PaxDb" id="83332-Rv2527"/>
<dbReference type="DNASU" id="887266"/>
<dbReference type="GeneID" id="887266"/>
<dbReference type="KEGG" id="mtu:Rv2527"/>
<dbReference type="KEGG" id="mtv:RVBD_2527"/>
<dbReference type="TubercuList" id="Rv2527"/>
<dbReference type="eggNOG" id="COG1487">
    <property type="taxonomic scope" value="Bacteria"/>
</dbReference>
<dbReference type="InParanoid" id="P9WF95"/>
<dbReference type="OrthoDB" id="5185254at2"/>
<dbReference type="PhylomeDB" id="P9WF95"/>
<dbReference type="Proteomes" id="UP000001584">
    <property type="component" value="Chromosome"/>
</dbReference>
<dbReference type="GO" id="GO:0000287">
    <property type="term" value="F:magnesium ion binding"/>
    <property type="evidence" value="ECO:0007669"/>
    <property type="project" value="UniProtKB-UniRule"/>
</dbReference>
<dbReference type="GO" id="GO:0004521">
    <property type="term" value="F:RNA endonuclease activity"/>
    <property type="evidence" value="ECO:0000318"/>
    <property type="project" value="GO_Central"/>
</dbReference>
<dbReference type="Gene3D" id="3.40.50.1010">
    <property type="entry name" value="5'-nuclease"/>
    <property type="match status" value="1"/>
</dbReference>
<dbReference type="HAMAP" id="MF_00265">
    <property type="entry name" value="VapC_Nob1"/>
    <property type="match status" value="1"/>
</dbReference>
<dbReference type="InterPro" id="IPR029060">
    <property type="entry name" value="PIN-like_dom_sf"/>
</dbReference>
<dbReference type="InterPro" id="IPR002716">
    <property type="entry name" value="PIN_dom"/>
</dbReference>
<dbReference type="InterPro" id="IPR050556">
    <property type="entry name" value="Type_II_TA_system_RNase"/>
</dbReference>
<dbReference type="InterPro" id="IPR022907">
    <property type="entry name" value="VapC_family"/>
</dbReference>
<dbReference type="PANTHER" id="PTHR33653">
    <property type="entry name" value="RIBONUCLEASE VAPC2"/>
    <property type="match status" value="1"/>
</dbReference>
<dbReference type="PANTHER" id="PTHR33653:SF1">
    <property type="entry name" value="RIBONUCLEASE VAPC2"/>
    <property type="match status" value="1"/>
</dbReference>
<dbReference type="Pfam" id="PF01850">
    <property type="entry name" value="PIN"/>
    <property type="match status" value="1"/>
</dbReference>
<dbReference type="SUPFAM" id="SSF88723">
    <property type="entry name" value="PIN domain-like"/>
    <property type="match status" value="1"/>
</dbReference>
<accession>P9WF95</accession>
<accession>L0TA20</accession>
<accession>P95026</accession>
<accession>Q7D6Z0</accession>
<proteinExistence type="evidence at protein level"/>
<comment type="function">
    <text evidence="1">Toxic component of a type II toxin-antitoxin (TA) system. An RNase. The cognate antitoxin is VapB17 (By similarity).</text>
</comment>
<comment type="cofactor">
    <cofactor evidence="1">
        <name>Mg(2+)</name>
        <dbReference type="ChEBI" id="CHEBI:18420"/>
    </cofactor>
</comment>
<comment type="similarity">
    <text evidence="1">Belongs to the PINc/VapC protein family.</text>
</comment>
<sequence>MTTWILDKSAHVRLVAGATPPAGIDLTDLAICDIGELEWLYSARSATDYDSQQTSLRAYQILRAPSDIFDRVRHLQRDLAHHRGMWHRTPLPDLFIAETALHHRAGVLHHDRDYKRIAVVRPGFQACELSRGR</sequence>
<keyword id="KW-0378">Hydrolase</keyword>
<keyword id="KW-0460">Magnesium</keyword>
<keyword id="KW-0479">Metal-binding</keyword>
<keyword id="KW-0540">Nuclease</keyword>
<keyword id="KW-1185">Reference proteome</keyword>
<keyword id="KW-1277">Toxin-antitoxin system</keyword>
<gene>
    <name evidence="1" type="primary">vapC17</name>
    <name type="ordered locus">Rv2527</name>
</gene>
<reference key="1">
    <citation type="journal article" date="1998" name="Nature">
        <title>Deciphering the biology of Mycobacterium tuberculosis from the complete genome sequence.</title>
        <authorList>
            <person name="Cole S.T."/>
            <person name="Brosch R."/>
            <person name="Parkhill J."/>
            <person name="Garnier T."/>
            <person name="Churcher C.M."/>
            <person name="Harris D.E."/>
            <person name="Gordon S.V."/>
            <person name="Eiglmeier K."/>
            <person name="Gas S."/>
            <person name="Barry C.E. III"/>
            <person name="Tekaia F."/>
            <person name="Badcock K."/>
            <person name="Basham D."/>
            <person name="Brown D."/>
            <person name="Chillingworth T."/>
            <person name="Connor R."/>
            <person name="Davies R.M."/>
            <person name="Devlin K."/>
            <person name="Feltwell T."/>
            <person name="Gentles S."/>
            <person name="Hamlin N."/>
            <person name="Holroyd S."/>
            <person name="Hornsby T."/>
            <person name="Jagels K."/>
            <person name="Krogh A."/>
            <person name="McLean J."/>
            <person name="Moule S."/>
            <person name="Murphy L.D."/>
            <person name="Oliver S."/>
            <person name="Osborne J."/>
            <person name="Quail M.A."/>
            <person name="Rajandream M.A."/>
            <person name="Rogers J."/>
            <person name="Rutter S."/>
            <person name="Seeger K."/>
            <person name="Skelton S."/>
            <person name="Squares S."/>
            <person name="Squares R."/>
            <person name="Sulston J.E."/>
            <person name="Taylor K."/>
            <person name="Whitehead S."/>
            <person name="Barrell B.G."/>
        </authorList>
    </citation>
    <scope>NUCLEOTIDE SEQUENCE [LARGE SCALE GENOMIC DNA]</scope>
    <source>
        <strain>ATCC 25618 / H37Rv</strain>
    </source>
</reference>
<reference key="2">
    <citation type="journal article" date="2005" name="Nucleic Acids Res.">
        <title>Toxin-antitoxin loci are highly abundant in free-living but lost from host-associated prokaryotes.</title>
        <authorList>
            <person name="Pandey D.P."/>
            <person name="Gerdes K."/>
        </authorList>
    </citation>
    <scope>POSSIBLE FUNCTION</scope>
    <source>
        <strain>ATCC 25618 / H37Rv</strain>
    </source>
</reference>
<reference key="3">
    <citation type="journal article" date="2011" name="Mol. Cell. Proteomics">
        <title>Proteogenomic analysis of Mycobacterium tuberculosis by high resolution mass spectrometry.</title>
        <authorList>
            <person name="Kelkar D.S."/>
            <person name="Kumar D."/>
            <person name="Kumar P."/>
            <person name="Balakrishnan L."/>
            <person name="Muthusamy B."/>
            <person name="Yadav A.K."/>
            <person name="Shrivastava P."/>
            <person name="Marimuthu A."/>
            <person name="Anand S."/>
            <person name="Sundaram H."/>
            <person name="Kingsbury R."/>
            <person name="Harsha H.C."/>
            <person name="Nair B."/>
            <person name="Prasad T.S."/>
            <person name="Chauhan D.S."/>
            <person name="Katoch K."/>
            <person name="Katoch V.M."/>
            <person name="Kumar P."/>
            <person name="Chaerkady R."/>
            <person name="Ramachandran S."/>
            <person name="Dash D."/>
            <person name="Pandey A."/>
        </authorList>
    </citation>
    <scope>IDENTIFICATION BY MASS SPECTROMETRY [LARGE SCALE ANALYSIS]</scope>
    <source>
        <strain>ATCC 25618 / H37Rv</strain>
    </source>
</reference>
<feature type="chain" id="PRO_0000407876" description="Ribonuclease VapC17">
    <location>
        <begin position="1"/>
        <end position="133"/>
    </location>
</feature>
<feature type="domain" description="PINc" evidence="1">
    <location>
        <begin position="30"/>
        <end position="118"/>
    </location>
</feature>
<feature type="binding site" evidence="1">
    <location>
        <position position="7"/>
    </location>
    <ligand>
        <name>Mg(2+)</name>
        <dbReference type="ChEBI" id="CHEBI:18420"/>
    </ligand>
</feature>
<feature type="binding site" evidence="1">
    <location>
        <position position="93"/>
    </location>
    <ligand>
        <name>Mg(2+)</name>
        <dbReference type="ChEBI" id="CHEBI:18420"/>
    </ligand>
</feature>
<protein>
    <recommendedName>
        <fullName evidence="1">Ribonuclease VapC17</fullName>
        <shortName evidence="1">RNase VapC17</shortName>
        <ecNumber evidence="1">3.1.-.-</ecNumber>
    </recommendedName>
    <alternativeName>
        <fullName evidence="1">Toxin VapC17</fullName>
    </alternativeName>
</protein>
<name>VPC17_MYCTU</name>
<organism>
    <name type="scientific">Mycobacterium tuberculosis (strain ATCC 25618 / H37Rv)</name>
    <dbReference type="NCBI Taxonomy" id="83332"/>
    <lineage>
        <taxon>Bacteria</taxon>
        <taxon>Bacillati</taxon>
        <taxon>Actinomycetota</taxon>
        <taxon>Actinomycetes</taxon>
        <taxon>Mycobacteriales</taxon>
        <taxon>Mycobacteriaceae</taxon>
        <taxon>Mycobacterium</taxon>
        <taxon>Mycobacterium tuberculosis complex</taxon>
    </lineage>
</organism>
<evidence type="ECO:0000255" key="1">
    <source>
        <dbReference type="HAMAP-Rule" id="MF_00265"/>
    </source>
</evidence>